<proteinExistence type="evidence at transcript level"/>
<accession>Q9ZPH9</accession>
<accession>Q93YZ6</accession>
<gene>
    <name type="ordered locus">At4g00750</name>
    <name type="ORF">F15P23.1</name>
</gene>
<organism>
    <name type="scientific">Arabidopsis thaliana</name>
    <name type="common">Mouse-ear cress</name>
    <dbReference type="NCBI Taxonomy" id="3702"/>
    <lineage>
        <taxon>Eukaryota</taxon>
        <taxon>Viridiplantae</taxon>
        <taxon>Streptophyta</taxon>
        <taxon>Embryophyta</taxon>
        <taxon>Tracheophyta</taxon>
        <taxon>Spermatophyta</taxon>
        <taxon>Magnoliopsida</taxon>
        <taxon>eudicotyledons</taxon>
        <taxon>Gunneridae</taxon>
        <taxon>Pentapetalae</taxon>
        <taxon>rosids</taxon>
        <taxon>malvids</taxon>
        <taxon>Brassicales</taxon>
        <taxon>Brassicaceae</taxon>
        <taxon>Camelineae</taxon>
        <taxon>Arabidopsis</taxon>
    </lineage>
</organism>
<sequence>MGNYRWPSKLSKLSLRAKQTNLYRVILIAILCVTFYFVGVWQHSGRGISRSSISNHELTSVPCTFPHQTTPILNFASRHTAPDLPPTITDARVVQIPSCGVEFSEYTPCEFVNRSLNFPRERLIYRERHCPEKHEIVRCRIPAPYGYSLPFRWPESRDVAWFANVPHTELTVEKKNQNWVRYEKDRFLFPGGGTMFPRGADAYIDEIGRLINLKDGSIRTAIDTGCGVASFGAYLMSRNIVTMSFAPRDTHEAQVQFALERGVPAIIGVLASIRLPFPARAFDIAHCSRCLIPWGQYNGTYLIEVDRVLRPGGYWILSGPPINWQRHWKGWERTRDDLNSEQSQIERVARSLCWRKLVQREDLAVWQKPTNHVHCKRNRIALGRPPFCHRTLPNQGWYTKLETCLTPLPEVTGSEIKEVAGGQLARWPERLNALPPRIKSGSLEGITEDEFVSNTEKWQRRVSYYKKYDQQLAETGRYRNFLDMNAHLGGFASALVDDPVWVMNVVPVEASVNTLGVIYERGLIGTYQNWCEAMSTYPRTYDFIHADSVFSLYKDRCDMEDILLEMDRILRPKGSVIIRDDIDVLTKVKKITDAMQWEGRIGDHENGPLEREKILFLVKEYWTAPAPDQSSDP</sequence>
<keyword id="KW-0325">Glycoprotein</keyword>
<keyword id="KW-0333">Golgi apparatus</keyword>
<keyword id="KW-0472">Membrane</keyword>
<keyword id="KW-0489">Methyltransferase</keyword>
<keyword id="KW-1185">Reference proteome</keyword>
<keyword id="KW-0735">Signal-anchor</keyword>
<keyword id="KW-0808">Transferase</keyword>
<keyword id="KW-0812">Transmembrane</keyword>
<keyword id="KW-1133">Transmembrane helix</keyword>
<name>PMTF_ARATH</name>
<protein>
    <recommendedName>
        <fullName>Probable methyltransferase PMT15</fullName>
        <ecNumber>2.1.1.-</ecNumber>
    </recommendedName>
</protein>
<dbReference type="EC" id="2.1.1.-"/>
<dbReference type="EMBL" id="AF128392">
    <property type="protein sequence ID" value="AAD17339.1"/>
    <property type="molecule type" value="Genomic_DNA"/>
</dbReference>
<dbReference type="EMBL" id="AL161472">
    <property type="protein sequence ID" value="CAB80884.1"/>
    <property type="molecule type" value="Genomic_DNA"/>
</dbReference>
<dbReference type="EMBL" id="CP002687">
    <property type="protein sequence ID" value="AEE81929.1"/>
    <property type="molecule type" value="Genomic_DNA"/>
</dbReference>
<dbReference type="EMBL" id="AY058882">
    <property type="protein sequence ID" value="AAL24268.1"/>
    <property type="status" value="ALT_INIT"/>
    <property type="molecule type" value="mRNA"/>
</dbReference>
<dbReference type="EMBL" id="BT000539">
    <property type="protein sequence ID" value="AAN18108.1"/>
    <property type="molecule type" value="mRNA"/>
</dbReference>
<dbReference type="PIR" id="C85010">
    <property type="entry name" value="C85010"/>
</dbReference>
<dbReference type="RefSeq" id="NP_191984.1">
    <property type="nucleotide sequence ID" value="NM_116300.4"/>
</dbReference>
<dbReference type="FunCoup" id="Q9ZPH9">
    <property type="interactions" value="216"/>
</dbReference>
<dbReference type="STRING" id="3702.Q9ZPH9"/>
<dbReference type="GlyGen" id="Q9ZPH9">
    <property type="glycosylation" value="2 sites"/>
</dbReference>
<dbReference type="PaxDb" id="3702-AT4G00750.1"/>
<dbReference type="ProteomicsDB" id="226282"/>
<dbReference type="EnsemblPlants" id="AT4G00750.1">
    <property type="protein sequence ID" value="AT4G00750.1"/>
    <property type="gene ID" value="AT4G00750"/>
</dbReference>
<dbReference type="GeneID" id="825923"/>
<dbReference type="Gramene" id="AT4G00750.1">
    <property type="protein sequence ID" value="AT4G00750.1"/>
    <property type="gene ID" value="AT4G00750"/>
</dbReference>
<dbReference type="KEGG" id="ath:AT4G00750"/>
<dbReference type="Araport" id="AT4G00750"/>
<dbReference type="TAIR" id="AT4G00750"/>
<dbReference type="eggNOG" id="ENOG502QQT2">
    <property type="taxonomic scope" value="Eukaryota"/>
</dbReference>
<dbReference type="HOGENOM" id="CLU_010485_2_2_1"/>
<dbReference type="InParanoid" id="Q9ZPH9"/>
<dbReference type="OMA" id="IADEMQW"/>
<dbReference type="PhylomeDB" id="Q9ZPH9"/>
<dbReference type="PRO" id="PR:Q9ZPH9"/>
<dbReference type="Proteomes" id="UP000006548">
    <property type="component" value="Chromosome 4"/>
</dbReference>
<dbReference type="ExpressionAtlas" id="Q9ZPH9">
    <property type="expression patterns" value="baseline and differential"/>
</dbReference>
<dbReference type="GO" id="GO:0005829">
    <property type="term" value="C:cytosol"/>
    <property type="evidence" value="ECO:0007005"/>
    <property type="project" value="TAIR"/>
</dbReference>
<dbReference type="GO" id="GO:0005768">
    <property type="term" value="C:endosome"/>
    <property type="evidence" value="ECO:0007005"/>
    <property type="project" value="TAIR"/>
</dbReference>
<dbReference type="GO" id="GO:0005794">
    <property type="term" value="C:Golgi apparatus"/>
    <property type="evidence" value="ECO:0007005"/>
    <property type="project" value="TAIR"/>
</dbReference>
<dbReference type="GO" id="GO:0000139">
    <property type="term" value="C:Golgi membrane"/>
    <property type="evidence" value="ECO:0007669"/>
    <property type="project" value="UniProtKB-SubCell"/>
</dbReference>
<dbReference type="GO" id="GO:0005802">
    <property type="term" value="C:trans-Golgi network"/>
    <property type="evidence" value="ECO:0007005"/>
    <property type="project" value="TAIR"/>
</dbReference>
<dbReference type="GO" id="GO:0008168">
    <property type="term" value="F:methyltransferase activity"/>
    <property type="evidence" value="ECO:0007669"/>
    <property type="project" value="UniProtKB-KW"/>
</dbReference>
<dbReference type="GO" id="GO:0032259">
    <property type="term" value="P:methylation"/>
    <property type="evidence" value="ECO:0007669"/>
    <property type="project" value="UniProtKB-KW"/>
</dbReference>
<dbReference type="FunFam" id="3.40.50.150:FF:000510">
    <property type="entry name" value="Probable methyltransferase PMT15"/>
    <property type="match status" value="1"/>
</dbReference>
<dbReference type="Gene3D" id="3.40.50.150">
    <property type="entry name" value="Vaccinia Virus protein VP39"/>
    <property type="match status" value="1"/>
</dbReference>
<dbReference type="InterPro" id="IPR004159">
    <property type="entry name" value="Put_SAM_MeTrfase"/>
</dbReference>
<dbReference type="InterPro" id="IPR029063">
    <property type="entry name" value="SAM-dependent_MTases_sf"/>
</dbReference>
<dbReference type="PANTHER" id="PTHR10108:SF1059">
    <property type="entry name" value="METHYLTRANSFERASE PMT15-RELATED"/>
    <property type="match status" value="1"/>
</dbReference>
<dbReference type="PANTHER" id="PTHR10108">
    <property type="entry name" value="SAM-DEPENDENT METHYLTRANSFERASE"/>
    <property type="match status" value="1"/>
</dbReference>
<dbReference type="Pfam" id="PF03141">
    <property type="entry name" value="Methyltransf_29"/>
    <property type="match status" value="1"/>
</dbReference>
<dbReference type="SUPFAM" id="SSF53335">
    <property type="entry name" value="S-adenosyl-L-methionine-dependent methyltransferases"/>
    <property type="match status" value="2"/>
</dbReference>
<reference key="1">
    <citation type="journal article" date="1999" name="Nature">
        <title>Sequence and analysis of chromosome 4 of the plant Arabidopsis thaliana.</title>
        <authorList>
            <person name="Mayer K.F.X."/>
            <person name="Schueller C."/>
            <person name="Wambutt R."/>
            <person name="Murphy G."/>
            <person name="Volckaert G."/>
            <person name="Pohl T."/>
            <person name="Duesterhoeft A."/>
            <person name="Stiekema W."/>
            <person name="Entian K.-D."/>
            <person name="Terryn N."/>
            <person name="Harris B."/>
            <person name="Ansorge W."/>
            <person name="Brandt P."/>
            <person name="Grivell L.A."/>
            <person name="Rieger M."/>
            <person name="Weichselgartner M."/>
            <person name="de Simone V."/>
            <person name="Obermaier B."/>
            <person name="Mache R."/>
            <person name="Mueller M."/>
            <person name="Kreis M."/>
            <person name="Delseny M."/>
            <person name="Puigdomenech P."/>
            <person name="Watson M."/>
            <person name="Schmidtheini T."/>
            <person name="Reichert B."/>
            <person name="Portetelle D."/>
            <person name="Perez-Alonso M."/>
            <person name="Boutry M."/>
            <person name="Bancroft I."/>
            <person name="Vos P."/>
            <person name="Hoheisel J."/>
            <person name="Zimmermann W."/>
            <person name="Wedler H."/>
            <person name="Ridley P."/>
            <person name="Langham S.-A."/>
            <person name="McCullagh B."/>
            <person name="Bilham L."/>
            <person name="Robben J."/>
            <person name="van der Schueren J."/>
            <person name="Grymonprez B."/>
            <person name="Chuang Y.-J."/>
            <person name="Vandenbussche F."/>
            <person name="Braeken M."/>
            <person name="Weltjens I."/>
            <person name="Voet M."/>
            <person name="Bastiaens I."/>
            <person name="Aert R."/>
            <person name="Defoor E."/>
            <person name="Weitzenegger T."/>
            <person name="Bothe G."/>
            <person name="Ramsperger U."/>
            <person name="Hilbert H."/>
            <person name="Braun M."/>
            <person name="Holzer E."/>
            <person name="Brandt A."/>
            <person name="Peters S."/>
            <person name="van Staveren M."/>
            <person name="Dirkse W."/>
            <person name="Mooijman P."/>
            <person name="Klein Lankhorst R."/>
            <person name="Rose M."/>
            <person name="Hauf J."/>
            <person name="Koetter P."/>
            <person name="Berneiser S."/>
            <person name="Hempel S."/>
            <person name="Feldpausch M."/>
            <person name="Lamberth S."/>
            <person name="Van den Daele H."/>
            <person name="De Keyser A."/>
            <person name="Buysshaert C."/>
            <person name="Gielen J."/>
            <person name="Villarroel R."/>
            <person name="De Clercq R."/>
            <person name="van Montagu M."/>
            <person name="Rogers J."/>
            <person name="Cronin A."/>
            <person name="Quail M.A."/>
            <person name="Bray-Allen S."/>
            <person name="Clark L."/>
            <person name="Doggett J."/>
            <person name="Hall S."/>
            <person name="Kay M."/>
            <person name="Lennard N."/>
            <person name="McLay K."/>
            <person name="Mayes R."/>
            <person name="Pettett A."/>
            <person name="Rajandream M.A."/>
            <person name="Lyne M."/>
            <person name="Benes V."/>
            <person name="Rechmann S."/>
            <person name="Borkova D."/>
            <person name="Bloecker H."/>
            <person name="Scharfe M."/>
            <person name="Grimm M."/>
            <person name="Loehnert T.-H."/>
            <person name="Dose S."/>
            <person name="de Haan M."/>
            <person name="Maarse A.C."/>
            <person name="Schaefer M."/>
            <person name="Mueller-Auer S."/>
            <person name="Gabel C."/>
            <person name="Fuchs M."/>
            <person name="Fartmann B."/>
            <person name="Granderath K."/>
            <person name="Dauner D."/>
            <person name="Herzl A."/>
            <person name="Neumann S."/>
            <person name="Argiriou A."/>
            <person name="Vitale D."/>
            <person name="Liguori R."/>
            <person name="Piravandi E."/>
            <person name="Massenet O."/>
            <person name="Quigley F."/>
            <person name="Clabauld G."/>
            <person name="Muendlein A."/>
            <person name="Felber R."/>
            <person name="Schnabl S."/>
            <person name="Hiller R."/>
            <person name="Schmidt W."/>
            <person name="Lecharny A."/>
            <person name="Aubourg S."/>
            <person name="Chefdor F."/>
            <person name="Cooke R."/>
            <person name="Berger C."/>
            <person name="Monfort A."/>
            <person name="Casacuberta E."/>
            <person name="Gibbons T."/>
            <person name="Weber N."/>
            <person name="Vandenbol M."/>
            <person name="Bargues M."/>
            <person name="Terol J."/>
            <person name="Torres A."/>
            <person name="Perez-Perez A."/>
            <person name="Purnelle B."/>
            <person name="Bent E."/>
            <person name="Johnson S."/>
            <person name="Tacon D."/>
            <person name="Jesse T."/>
            <person name="Heijnen L."/>
            <person name="Schwarz S."/>
            <person name="Scholler P."/>
            <person name="Heber S."/>
            <person name="Francs P."/>
            <person name="Bielke C."/>
            <person name="Frishman D."/>
            <person name="Haase D."/>
            <person name="Lemcke K."/>
            <person name="Mewes H.-W."/>
            <person name="Stocker S."/>
            <person name="Zaccaria P."/>
            <person name="Bevan M."/>
            <person name="Wilson R.K."/>
            <person name="de la Bastide M."/>
            <person name="Habermann K."/>
            <person name="Parnell L."/>
            <person name="Dedhia N."/>
            <person name="Gnoj L."/>
            <person name="Schutz K."/>
            <person name="Huang E."/>
            <person name="Spiegel L."/>
            <person name="Sekhon M."/>
            <person name="Murray J."/>
            <person name="Sheet P."/>
            <person name="Cordes M."/>
            <person name="Abu-Threideh J."/>
            <person name="Stoneking T."/>
            <person name="Kalicki J."/>
            <person name="Graves T."/>
            <person name="Harmon G."/>
            <person name="Edwards J."/>
            <person name="Latreille P."/>
            <person name="Courtney L."/>
            <person name="Cloud J."/>
            <person name="Abbott A."/>
            <person name="Scott K."/>
            <person name="Johnson D."/>
            <person name="Minx P."/>
            <person name="Bentley D."/>
            <person name="Fulton B."/>
            <person name="Miller N."/>
            <person name="Greco T."/>
            <person name="Kemp K."/>
            <person name="Kramer J."/>
            <person name="Fulton L."/>
            <person name="Mardis E."/>
            <person name="Dante M."/>
            <person name="Pepin K."/>
            <person name="Hillier L.W."/>
            <person name="Nelson J."/>
            <person name="Spieth J."/>
            <person name="Ryan E."/>
            <person name="Andrews S."/>
            <person name="Geisel C."/>
            <person name="Layman D."/>
            <person name="Du H."/>
            <person name="Ali J."/>
            <person name="Berghoff A."/>
            <person name="Jones K."/>
            <person name="Drone K."/>
            <person name="Cotton M."/>
            <person name="Joshu C."/>
            <person name="Antonoiu B."/>
            <person name="Zidanic M."/>
            <person name="Strong C."/>
            <person name="Sun H."/>
            <person name="Lamar B."/>
            <person name="Yordan C."/>
            <person name="Ma P."/>
            <person name="Zhong J."/>
            <person name="Preston R."/>
            <person name="Vil D."/>
            <person name="Shekher M."/>
            <person name="Matero A."/>
            <person name="Shah R."/>
            <person name="Swaby I.K."/>
            <person name="O'Shaughnessy A."/>
            <person name="Rodriguez M."/>
            <person name="Hoffman J."/>
            <person name="Till S."/>
            <person name="Granat S."/>
            <person name="Shohdy N."/>
            <person name="Hasegawa A."/>
            <person name="Hameed A."/>
            <person name="Lodhi M."/>
            <person name="Johnson A."/>
            <person name="Chen E."/>
            <person name="Marra M.A."/>
            <person name="Martienssen R."/>
            <person name="McCombie W.R."/>
        </authorList>
    </citation>
    <scope>NUCLEOTIDE SEQUENCE [LARGE SCALE GENOMIC DNA]</scope>
    <source>
        <strain>cv. Columbia</strain>
    </source>
</reference>
<reference key="2">
    <citation type="journal article" date="2017" name="Plant J.">
        <title>Araport11: a complete reannotation of the Arabidopsis thaliana reference genome.</title>
        <authorList>
            <person name="Cheng C.Y."/>
            <person name="Krishnakumar V."/>
            <person name="Chan A.P."/>
            <person name="Thibaud-Nissen F."/>
            <person name="Schobel S."/>
            <person name="Town C.D."/>
        </authorList>
    </citation>
    <scope>GENOME REANNOTATION</scope>
    <source>
        <strain>cv. Columbia</strain>
    </source>
</reference>
<reference key="3">
    <citation type="journal article" date="2003" name="Science">
        <title>Empirical analysis of transcriptional activity in the Arabidopsis genome.</title>
        <authorList>
            <person name="Yamada K."/>
            <person name="Lim J."/>
            <person name="Dale J.M."/>
            <person name="Chen H."/>
            <person name="Shinn P."/>
            <person name="Palm C.J."/>
            <person name="Southwick A.M."/>
            <person name="Wu H.C."/>
            <person name="Kim C.J."/>
            <person name="Nguyen M."/>
            <person name="Pham P.K."/>
            <person name="Cheuk R.F."/>
            <person name="Karlin-Newmann G."/>
            <person name="Liu S.X."/>
            <person name="Lam B."/>
            <person name="Sakano H."/>
            <person name="Wu T."/>
            <person name="Yu G."/>
            <person name="Miranda M."/>
            <person name="Quach H.L."/>
            <person name="Tripp M."/>
            <person name="Chang C.H."/>
            <person name="Lee J.M."/>
            <person name="Toriumi M.J."/>
            <person name="Chan M.M."/>
            <person name="Tang C.C."/>
            <person name="Onodera C.S."/>
            <person name="Deng J.M."/>
            <person name="Akiyama K."/>
            <person name="Ansari Y."/>
            <person name="Arakawa T."/>
            <person name="Banh J."/>
            <person name="Banno F."/>
            <person name="Bowser L."/>
            <person name="Brooks S.Y."/>
            <person name="Carninci P."/>
            <person name="Chao Q."/>
            <person name="Choy N."/>
            <person name="Enju A."/>
            <person name="Goldsmith A.D."/>
            <person name="Gurjal M."/>
            <person name="Hansen N.F."/>
            <person name="Hayashizaki Y."/>
            <person name="Johnson-Hopson C."/>
            <person name="Hsuan V.W."/>
            <person name="Iida K."/>
            <person name="Karnes M."/>
            <person name="Khan S."/>
            <person name="Koesema E."/>
            <person name="Ishida J."/>
            <person name="Jiang P.X."/>
            <person name="Jones T."/>
            <person name="Kawai J."/>
            <person name="Kamiya A."/>
            <person name="Meyers C."/>
            <person name="Nakajima M."/>
            <person name="Narusaka M."/>
            <person name="Seki M."/>
            <person name="Sakurai T."/>
            <person name="Satou M."/>
            <person name="Tamse R."/>
            <person name="Vaysberg M."/>
            <person name="Wallender E.K."/>
            <person name="Wong C."/>
            <person name="Yamamura Y."/>
            <person name="Yuan S."/>
            <person name="Shinozaki K."/>
            <person name="Davis R.W."/>
            <person name="Theologis A."/>
            <person name="Ecker J.R."/>
        </authorList>
    </citation>
    <scope>NUCLEOTIDE SEQUENCE [LARGE SCALE MRNA] OF 366-633</scope>
    <source>
        <strain>cv. Columbia</strain>
    </source>
</reference>
<reference key="4">
    <citation type="journal article" date="2007" name="Plant J.">
        <title>The TUMOROUS SHOOT DEVELOPMENT2 gene of Arabidopsis encoding a putative methyltransferase is required for cell adhesion and co-ordinated plant development.</title>
        <authorList>
            <person name="Krupkova E."/>
            <person name="Immerzeel P."/>
            <person name="Pauly M."/>
            <person name="Schmulling T."/>
        </authorList>
    </citation>
    <scope>GENE FAMILY</scope>
</reference>
<evidence type="ECO:0000255" key="1"/>
<evidence type="ECO:0000305" key="2"/>
<feature type="chain" id="PRO_0000393255" description="Probable methyltransferase PMT15">
    <location>
        <begin position="1"/>
        <end position="633"/>
    </location>
</feature>
<feature type="topological domain" description="Cytoplasmic" evidence="1">
    <location>
        <begin position="1"/>
        <end position="24"/>
    </location>
</feature>
<feature type="transmembrane region" description="Helical; Signal-anchor for type II membrane protein" evidence="1">
    <location>
        <begin position="25"/>
        <end position="45"/>
    </location>
</feature>
<feature type="topological domain" description="Lumenal" evidence="1">
    <location>
        <begin position="46"/>
        <end position="633"/>
    </location>
</feature>
<feature type="glycosylation site" description="N-linked (GlcNAc...) asparagine" evidence="1">
    <location>
        <position position="113"/>
    </location>
</feature>
<feature type="glycosylation site" description="N-linked (GlcNAc...) asparagine" evidence="1">
    <location>
        <position position="298"/>
    </location>
</feature>
<comment type="subcellular location">
    <subcellularLocation>
        <location evidence="2">Golgi apparatus membrane</location>
        <topology evidence="2">Single-pass type II membrane protein</topology>
    </subcellularLocation>
</comment>
<comment type="similarity">
    <text evidence="2">Belongs to the methyltransferase superfamily.</text>
</comment>
<comment type="sequence caution" evidence="2">
    <conflict type="erroneous initiation">
        <sequence resource="EMBL-CDS" id="AAL24268"/>
    </conflict>
    <text>Truncated N-terminus.</text>
</comment>